<name>Y3633_MYCTO</name>
<dbReference type="EMBL" id="AE000516">
    <property type="protein sequence ID" value="AAK48096.1"/>
    <property type="molecule type" value="Genomic_DNA"/>
</dbReference>
<dbReference type="PIR" id="B70562">
    <property type="entry name" value="B70562"/>
</dbReference>
<dbReference type="RefSeq" id="WP_003419601.1">
    <property type="nucleotide sequence ID" value="NZ_KK341227.1"/>
</dbReference>
<dbReference type="SMR" id="P9WI88"/>
<dbReference type="KEGG" id="mtc:MT3735"/>
<dbReference type="PATRIC" id="fig|83331.31.peg.4019"/>
<dbReference type="HOGENOM" id="CLU_047725_3_0_11"/>
<dbReference type="Proteomes" id="UP000001020">
    <property type="component" value="Chromosome"/>
</dbReference>
<dbReference type="GO" id="GO:0016706">
    <property type="term" value="F:2-oxoglutarate-dependent dioxygenase activity"/>
    <property type="evidence" value="ECO:0007669"/>
    <property type="project" value="UniProtKB-ARBA"/>
</dbReference>
<dbReference type="GO" id="GO:0005506">
    <property type="term" value="F:iron ion binding"/>
    <property type="evidence" value="ECO:0007669"/>
    <property type="project" value="UniProtKB-ARBA"/>
</dbReference>
<dbReference type="FunFam" id="2.60.120.620:FF:000028">
    <property type="entry name" value="Phytanoyl-CoA dioxygenase"/>
    <property type="match status" value="1"/>
</dbReference>
<dbReference type="Gene3D" id="2.60.120.620">
    <property type="entry name" value="q2cbj1_9rhob like domain"/>
    <property type="match status" value="1"/>
</dbReference>
<dbReference type="InterPro" id="IPR008775">
    <property type="entry name" value="Phytyl_CoA_dOase-like"/>
</dbReference>
<dbReference type="PANTHER" id="PTHR20883:SF48">
    <property type="entry name" value="ECTOINE DIOXYGENASE"/>
    <property type="match status" value="1"/>
</dbReference>
<dbReference type="PANTHER" id="PTHR20883">
    <property type="entry name" value="PHYTANOYL-COA DIOXYGENASE DOMAIN CONTAINING 1"/>
    <property type="match status" value="1"/>
</dbReference>
<dbReference type="Pfam" id="PF05721">
    <property type="entry name" value="PhyH"/>
    <property type="match status" value="1"/>
</dbReference>
<dbReference type="SUPFAM" id="SSF51197">
    <property type="entry name" value="Clavaminate synthase-like"/>
    <property type="match status" value="1"/>
</dbReference>
<comment type="similarity">
    <text evidence="1">Belongs to the PhyH family.</text>
</comment>
<evidence type="ECO:0000305" key="1"/>
<organism>
    <name type="scientific">Mycobacterium tuberculosis (strain CDC 1551 / Oshkosh)</name>
    <dbReference type="NCBI Taxonomy" id="83331"/>
    <lineage>
        <taxon>Bacteria</taxon>
        <taxon>Bacillati</taxon>
        <taxon>Actinomycetota</taxon>
        <taxon>Actinomycetes</taxon>
        <taxon>Mycobacteriales</taxon>
        <taxon>Mycobacteriaceae</taxon>
        <taxon>Mycobacterium</taxon>
        <taxon>Mycobacterium tuberculosis complex</taxon>
    </lineage>
</organism>
<keyword id="KW-1185">Reference proteome</keyword>
<sequence length="291" mass="32447">MTQSSSVERLVGEIDEFGYTVVEDVLDADSVAAYLADTRRLERELPTVIANSTTVVKGLARPGHVPVDRVDHDWVRIDNLLLHGTRYEALPVHPKLLPVIEGVLGRDCLLSWCMTSNQLPGAVAQRLHCDDEMYPLPRPHQPLLCNALIALCDFTADNGATQVVPGSHRWPERPSPPYPEGKPVEINAGDALIWNGSLWHTAAANRTDAPRPALTINFCVGFVRQQVNQQLSIPRELVRCFEPRLQELIGYGLYAGKMGRIDWRPPADYLDADRHPFLDAVADRLQTSVRL</sequence>
<gene>
    <name type="ordered locus">MT3735</name>
</gene>
<accession>P9WI88</accession>
<accession>L0TG21</accession>
<accession>O06374</accession>
<accession>P67772</accession>
<protein>
    <recommendedName>
        <fullName>Uncharacterized protein MT3735</fullName>
    </recommendedName>
</protein>
<feature type="chain" id="PRO_0000428049" description="Uncharacterized protein MT3735">
    <location>
        <begin position="1"/>
        <end position="291"/>
    </location>
</feature>
<proteinExistence type="inferred from homology"/>
<reference key="1">
    <citation type="journal article" date="2002" name="J. Bacteriol.">
        <title>Whole-genome comparison of Mycobacterium tuberculosis clinical and laboratory strains.</title>
        <authorList>
            <person name="Fleischmann R.D."/>
            <person name="Alland D."/>
            <person name="Eisen J.A."/>
            <person name="Carpenter L."/>
            <person name="White O."/>
            <person name="Peterson J.D."/>
            <person name="DeBoy R.T."/>
            <person name="Dodson R.J."/>
            <person name="Gwinn M.L."/>
            <person name="Haft D.H."/>
            <person name="Hickey E.K."/>
            <person name="Kolonay J.F."/>
            <person name="Nelson W.C."/>
            <person name="Umayam L.A."/>
            <person name="Ermolaeva M.D."/>
            <person name="Salzberg S.L."/>
            <person name="Delcher A."/>
            <person name="Utterback T.R."/>
            <person name="Weidman J.F."/>
            <person name="Khouri H.M."/>
            <person name="Gill J."/>
            <person name="Mikula A."/>
            <person name="Bishai W."/>
            <person name="Jacobs W.R. Jr."/>
            <person name="Venter J.C."/>
            <person name="Fraser C.M."/>
        </authorList>
    </citation>
    <scope>NUCLEOTIDE SEQUENCE [LARGE SCALE GENOMIC DNA]</scope>
    <source>
        <strain>CDC 1551 / Oshkosh</strain>
    </source>
</reference>